<comment type="function">
    <text evidence="1">Part of a membrane-bound complex that couples electron transfer with translocation of ions across the membrane.</text>
</comment>
<comment type="subunit">
    <text evidence="1">The complex is composed of six subunits: RnfA, RnfB, RnfC, RnfD, RnfE and RnfG.</text>
</comment>
<comment type="subcellular location">
    <subcellularLocation>
        <location evidence="1">Cell inner membrane</location>
        <topology evidence="1">Multi-pass membrane protein</topology>
    </subcellularLocation>
</comment>
<comment type="similarity">
    <text evidence="1">Belongs to the NqrDE/RnfAE family.</text>
</comment>
<sequence length="230" mass="24682">MSDHKTLIKNGMWANNPALVQLLGLCPLLAVSSTVTNALGLGIATLLVLVGSNVSVSLVRNHVPKEVRIPVFVMIIASLVTCVQLLMNAYAYGLYLSLGIFIPLIVTNCIIIGRAEAFASKNEVLPAAQDGFWMGLGMTSVLVVLGAMREIIGNGTLFDGADLLLGDWASVLRIQIFQFDNSFLLALLPPGAFIGVGFLIALKNIIDNQAKSRQPKQEKPVIERARVTNA</sequence>
<keyword id="KW-0997">Cell inner membrane</keyword>
<keyword id="KW-1003">Cell membrane</keyword>
<keyword id="KW-0249">Electron transport</keyword>
<keyword id="KW-0472">Membrane</keyword>
<keyword id="KW-1278">Translocase</keyword>
<keyword id="KW-0812">Transmembrane</keyword>
<keyword id="KW-1133">Transmembrane helix</keyword>
<keyword id="KW-0813">Transport</keyword>
<gene>
    <name evidence="1" type="primary">rnfE</name>
    <name type="ordered locus">VS_0972</name>
</gene>
<feature type="chain" id="PRO_1000135565" description="Ion-translocating oxidoreductase complex subunit E">
    <location>
        <begin position="1"/>
        <end position="230"/>
    </location>
</feature>
<feature type="transmembrane region" description="Helical" evidence="1">
    <location>
        <begin position="11"/>
        <end position="31"/>
    </location>
</feature>
<feature type="transmembrane region" description="Helical" evidence="1">
    <location>
        <begin position="39"/>
        <end position="59"/>
    </location>
</feature>
<feature type="transmembrane region" description="Helical" evidence="1">
    <location>
        <begin position="69"/>
        <end position="89"/>
    </location>
</feature>
<feature type="transmembrane region" description="Helical" evidence="1">
    <location>
        <begin position="93"/>
        <end position="113"/>
    </location>
</feature>
<feature type="transmembrane region" description="Helical" evidence="1">
    <location>
        <begin position="132"/>
        <end position="152"/>
    </location>
</feature>
<feature type="transmembrane region" description="Helical" evidence="1">
    <location>
        <begin position="182"/>
        <end position="202"/>
    </location>
</feature>
<protein>
    <recommendedName>
        <fullName evidence="1">Ion-translocating oxidoreductase complex subunit E</fullName>
        <ecNumber evidence="1">7.-.-.-</ecNumber>
    </recommendedName>
    <alternativeName>
        <fullName evidence="1">Rnf electron transport complex subunit E</fullName>
    </alternativeName>
</protein>
<proteinExistence type="inferred from homology"/>
<dbReference type="EC" id="7.-.-.-" evidence="1"/>
<dbReference type="EMBL" id="FM954972">
    <property type="protein sequence ID" value="CAV17996.1"/>
    <property type="molecule type" value="Genomic_DNA"/>
</dbReference>
<dbReference type="SMR" id="B7VLT3"/>
<dbReference type="STRING" id="575788.VS_0972"/>
<dbReference type="KEGG" id="vsp:VS_0972"/>
<dbReference type="eggNOG" id="COG4660">
    <property type="taxonomic scope" value="Bacteria"/>
</dbReference>
<dbReference type="HOGENOM" id="CLU_046659_1_0_6"/>
<dbReference type="Proteomes" id="UP000009100">
    <property type="component" value="Chromosome 1"/>
</dbReference>
<dbReference type="GO" id="GO:0005886">
    <property type="term" value="C:plasma membrane"/>
    <property type="evidence" value="ECO:0007669"/>
    <property type="project" value="UniProtKB-SubCell"/>
</dbReference>
<dbReference type="GO" id="GO:0022900">
    <property type="term" value="P:electron transport chain"/>
    <property type="evidence" value="ECO:0007669"/>
    <property type="project" value="UniProtKB-UniRule"/>
</dbReference>
<dbReference type="HAMAP" id="MF_00478">
    <property type="entry name" value="RsxE_RnfE"/>
    <property type="match status" value="1"/>
</dbReference>
<dbReference type="InterPro" id="IPR003667">
    <property type="entry name" value="NqrDE/RnfAE"/>
</dbReference>
<dbReference type="InterPro" id="IPR010968">
    <property type="entry name" value="RnfE"/>
</dbReference>
<dbReference type="NCBIfam" id="NF009070">
    <property type="entry name" value="PRK12405.1"/>
    <property type="match status" value="1"/>
</dbReference>
<dbReference type="NCBIfam" id="TIGR01948">
    <property type="entry name" value="rnfE"/>
    <property type="match status" value="1"/>
</dbReference>
<dbReference type="PANTHER" id="PTHR30586">
    <property type="entry name" value="ELECTRON TRANSPORT COMPLEX PROTEIN RNFE"/>
    <property type="match status" value="1"/>
</dbReference>
<dbReference type="PANTHER" id="PTHR30586:SF0">
    <property type="entry name" value="ION-TRANSLOCATING OXIDOREDUCTASE COMPLEX SUBUNIT E"/>
    <property type="match status" value="1"/>
</dbReference>
<dbReference type="Pfam" id="PF02508">
    <property type="entry name" value="Rnf-Nqr"/>
    <property type="match status" value="1"/>
</dbReference>
<dbReference type="PIRSF" id="PIRSF006102">
    <property type="entry name" value="NQR_DE"/>
    <property type="match status" value="1"/>
</dbReference>
<organism>
    <name type="scientific">Vibrio atlanticus (strain LGP32)</name>
    <name type="common">Vibrio splendidus (strain Mel32)</name>
    <dbReference type="NCBI Taxonomy" id="575788"/>
    <lineage>
        <taxon>Bacteria</taxon>
        <taxon>Pseudomonadati</taxon>
        <taxon>Pseudomonadota</taxon>
        <taxon>Gammaproteobacteria</taxon>
        <taxon>Vibrionales</taxon>
        <taxon>Vibrionaceae</taxon>
        <taxon>Vibrio</taxon>
    </lineage>
</organism>
<name>RNFE_VIBA3</name>
<accession>B7VLT3</accession>
<reference key="1">
    <citation type="submission" date="2009-02" db="EMBL/GenBank/DDBJ databases">
        <title>Vibrio splendidus str. LGP32 complete genome.</title>
        <authorList>
            <person name="Mazel D."/>
            <person name="Le Roux F."/>
        </authorList>
    </citation>
    <scope>NUCLEOTIDE SEQUENCE [LARGE SCALE GENOMIC DNA]</scope>
    <source>
        <strain>LGP32</strain>
    </source>
</reference>
<evidence type="ECO:0000255" key="1">
    <source>
        <dbReference type="HAMAP-Rule" id="MF_00478"/>
    </source>
</evidence>